<evidence type="ECO:0000256" key="1">
    <source>
        <dbReference type="SAM" id="MobiDB-lite"/>
    </source>
</evidence>
<gene>
    <name type="ordered locus">HI_1405</name>
</gene>
<feature type="chain" id="PRO_0000078043" description="Uncharacterized protein HI_1405">
    <location>
        <begin position="1"/>
        <end position="366"/>
    </location>
</feature>
<feature type="region of interest" description="Disordered" evidence="1">
    <location>
        <begin position="199"/>
        <end position="267"/>
    </location>
</feature>
<protein>
    <recommendedName>
        <fullName>Uncharacterized protein HI_1405</fullName>
    </recommendedName>
</protein>
<dbReference type="EMBL" id="L42023">
    <property type="protein sequence ID" value="AAC23055.1"/>
    <property type="molecule type" value="Genomic_DNA"/>
</dbReference>
<dbReference type="PIR" id="A64028">
    <property type="entry name" value="A64028"/>
</dbReference>
<dbReference type="RefSeq" id="NP_439557.1">
    <property type="nucleotide sequence ID" value="NC_000907.1"/>
</dbReference>
<dbReference type="SMR" id="P44180"/>
<dbReference type="STRING" id="71421.HI_1405"/>
<dbReference type="EnsemblBacteria" id="AAC23055">
    <property type="protein sequence ID" value="AAC23055"/>
    <property type="gene ID" value="HI_1405"/>
</dbReference>
<dbReference type="KEGG" id="hin:HI_1405"/>
<dbReference type="PATRIC" id="fig|71421.8.peg.1465"/>
<dbReference type="eggNOG" id="COG3566">
    <property type="taxonomic scope" value="Bacteria"/>
</dbReference>
<dbReference type="HOGENOM" id="CLU_717378_0_0_6"/>
<dbReference type="OrthoDB" id="9813763at2"/>
<dbReference type="BioCyc" id="HINF71421:G1GJ1-1430-MONOMER"/>
<dbReference type="Proteomes" id="UP000000579">
    <property type="component" value="Chromosome"/>
</dbReference>
<dbReference type="InterPro" id="IPR016913">
    <property type="entry name" value="UCP029215"/>
</dbReference>
<dbReference type="Pfam" id="PF09979">
    <property type="entry name" value="DUF2213"/>
    <property type="match status" value="1"/>
</dbReference>
<dbReference type="PIRSF" id="PIRSF029215">
    <property type="entry name" value="UCP029215"/>
    <property type="match status" value="1"/>
</dbReference>
<proteinExistence type="predicted"/>
<organism>
    <name type="scientific">Haemophilus influenzae (strain ATCC 51907 / DSM 11121 / KW20 / Rd)</name>
    <dbReference type="NCBI Taxonomy" id="71421"/>
    <lineage>
        <taxon>Bacteria</taxon>
        <taxon>Pseudomonadati</taxon>
        <taxon>Pseudomonadota</taxon>
        <taxon>Gammaproteobacteria</taxon>
        <taxon>Pasteurellales</taxon>
        <taxon>Pasteurellaceae</taxon>
        <taxon>Haemophilus</taxon>
    </lineage>
</organism>
<reference key="1">
    <citation type="journal article" date="1995" name="Science">
        <title>Whole-genome random sequencing and assembly of Haemophilus influenzae Rd.</title>
        <authorList>
            <person name="Fleischmann R.D."/>
            <person name="Adams M.D."/>
            <person name="White O."/>
            <person name="Clayton R.A."/>
            <person name="Kirkness E.F."/>
            <person name="Kerlavage A.R."/>
            <person name="Bult C.J."/>
            <person name="Tomb J.-F."/>
            <person name="Dougherty B.A."/>
            <person name="Merrick J.M."/>
            <person name="McKenney K."/>
            <person name="Sutton G.G."/>
            <person name="FitzHugh W."/>
            <person name="Fields C.A."/>
            <person name="Gocayne J.D."/>
            <person name="Scott J.D."/>
            <person name="Shirley R."/>
            <person name="Liu L.-I."/>
            <person name="Glodek A."/>
            <person name="Kelley J.M."/>
            <person name="Weidman J.F."/>
            <person name="Phillips C.A."/>
            <person name="Spriggs T."/>
            <person name="Hedblom E."/>
            <person name="Cotton M.D."/>
            <person name="Utterback T.R."/>
            <person name="Hanna M.C."/>
            <person name="Nguyen D.T."/>
            <person name="Saudek D.M."/>
            <person name="Brandon R.C."/>
            <person name="Fine L.D."/>
            <person name="Fritchman J.L."/>
            <person name="Fuhrmann J.L."/>
            <person name="Geoghagen N.S.M."/>
            <person name="Gnehm C.L."/>
            <person name="McDonald L.A."/>
            <person name="Small K.V."/>
            <person name="Fraser C.M."/>
            <person name="Smith H.O."/>
            <person name="Venter J.C."/>
        </authorList>
    </citation>
    <scope>NUCLEOTIDE SEQUENCE [LARGE SCALE GENOMIC DNA]</scope>
    <source>
        <strain>ATCC 51907 / DSM 11121 / KW20 / Rd</strain>
    </source>
</reference>
<sequence length="366" mass="40122">MKFTDKTTQADTQRTITKDGFLVVPATISKVGVFDYLATELGLKEDGIKKVARTEKSLFSDETIKSFENATLTVGHLKDGVNAKNWKQLSVGVVRNVKRVGDELTAEAWIYDEQAIKTVQEHGVEQLSCGYDCDIKPSTVQDADFEMSPMIGNHVAIVAKGRCGGSVKLADEDKTIMGKTAKILDAFLGAFGIKLSDEQKKQIEDEEKSGSEEGKEPKGEQPTKPKEKKSEPENKKEDDVEKEELEKSLKAKDEEIQQLKDAQAKRDAEVKQAAVLADAKTAFKEVNFADNATVREIQESAVVAQGIFTKDEAAKLSDEEISGAYQTAKVVVAKLADERKSLGNILLGDAEPKAAPKIDFNKTYNS</sequence>
<accession>P44180</accession>
<keyword id="KW-1185">Reference proteome</keyword>
<name>Y1405_HAEIN</name>